<accession>Q6FB05</accession>
<keyword id="KW-0963">Cytoplasm</keyword>
<keyword id="KW-0378">Hydrolase</keyword>
<keyword id="KW-0546">Nucleotide metabolism</keyword>
<organism>
    <name type="scientific">Acinetobacter baylyi (strain ATCC 33305 / BD413 / ADP1)</name>
    <dbReference type="NCBI Taxonomy" id="62977"/>
    <lineage>
        <taxon>Bacteria</taxon>
        <taxon>Pseudomonadati</taxon>
        <taxon>Pseudomonadota</taxon>
        <taxon>Gammaproteobacteria</taxon>
        <taxon>Moraxellales</taxon>
        <taxon>Moraxellaceae</taxon>
        <taxon>Acinetobacter</taxon>
    </lineage>
</organism>
<sequence>MSNISDIILASSSQTRKALMDRLGLTYRIISPDIDESPQGETHADDLAQRLAFEKARVVSAQYPNSIVIGSDQVAWRIDLPKQFIGKPLTIENAMAQLKQNSGQTLCFSTGLSIQHLASGFEHTLIEHYQVKFRVLTDAEIERYVTTEQPLQCAGSFRCEGLGISLFESMQGSDQTTLMGLPLITLCKYLRQLNIQLP</sequence>
<feature type="chain" id="PRO_0000267237" description="Nucleoside triphosphate pyrophosphatase">
    <location>
        <begin position="1"/>
        <end position="198"/>
    </location>
</feature>
<feature type="active site" description="Proton acceptor" evidence="1">
    <location>
        <position position="72"/>
    </location>
</feature>
<protein>
    <recommendedName>
        <fullName evidence="1">Nucleoside triphosphate pyrophosphatase</fullName>
        <ecNumber evidence="1">3.6.1.9</ecNumber>
    </recommendedName>
    <alternativeName>
        <fullName evidence="1">Nucleotide pyrophosphatase</fullName>
        <shortName evidence="1">Nucleotide PPase</shortName>
    </alternativeName>
</protein>
<reference key="1">
    <citation type="journal article" date="2004" name="Nucleic Acids Res.">
        <title>Unique features revealed by the genome sequence of Acinetobacter sp. ADP1, a versatile and naturally transformation competent bacterium.</title>
        <authorList>
            <person name="Barbe V."/>
            <person name="Vallenet D."/>
            <person name="Fonknechten N."/>
            <person name="Kreimeyer A."/>
            <person name="Oztas S."/>
            <person name="Labarre L."/>
            <person name="Cruveiller S."/>
            <person name="Robert C."/>
            <person name="Duprat S."/>
            <person name="Wincker P."/>
            <person name="Ornston L.N."/>
            <person name="Weissenbach J."/>
            <person name="Marliere P."/>
            <person name="Cohen G.N."/>
            <person name="Medigue C."/>
        </authorList>
    </citation>
    <scope>NUCLEOTIDE SEQUENCE [LARGE SCALE GENOMIC DNA]</scope>
    <source>
        <strain>ATCC 33305 / BD413 / ADP1</strain>
    </source>
</reference>
<dbReference type="EC" id="3.6.1.9" evidence="1"/>
<dbReference type="EMBL" id="CR543861">
    <property type="protein sequence ID" value="CAG68758.1"/>
    <property type="molecule type" value="Genomic_DNA"/>
</dbReference>
<dbReference type="RefSeq" id="WP_004927176.1">
    <property type="nucleotide sequence ID" value="NC_005966.1"/>
</dbReference>
<dbReference type="SMR" id="Q6FB05"/>
<dbReference type="STRING" id="202950.GCA_001485005_00435"/>
<dbReference type="GeneID" id="45234296"/>
<dbReference type="KEGG" id="aci:ACIAD1930"/>
<dbReference type="eggNOG" id="COG0424">
    <property type="taxonomic scope" value="Bacteria"/>
</dbReference>
<dbReference type="HOGENOM" id="CLU_040416_1_0_6"/>
<dbReference type="OrthoDB" id="9813694at2"/>
<dbReference type="BioCyc" id="ASP62977:ACIAD_RS08885-MONOMER"/>
<dbReference type="Proteomes" id="UP000000430">
    <property type="component" value="Chromosome"/>
</dbReference>
<dbReference type="GO" id="GO:0005737">
    <property type="term" value="C:cytoplasm"/>
    <property type="evidence" value="ECO:0007669"/>
    <property type="project" value="UniProtKB-SubCell"/>
</dbReference>
<dbReference type="GO" id="GO:0047429">
    <property type="term" value="F:nucleoside triphosphate diphosphatase activity"/>
    <property type="evidence" value="ECO:0007669"/>
    <property type="project" value="UniProtKB-EC"/>
</dbReference>
<dbReference type="GO" id="GO:0009117">
    <property type="term" value="P:nucleotide metabolic process"/>
    <property type="evidence" value="ECO:0007669"/>
    <property type="project" value="UniProtKB-KW"/>
</dbReference>
<dbReference type="CDD" id="cd00555">
    <property type="entry name" value="Maf"/>
    <property type="match status" value="1"/>
</dbReference>
<dbReference type="Gene3D" id="3.90.950.10">
    <property type="match status" value="1"/>
</dbReference>
<dbReference type="HAMAP" id="MF_00528">
    <property type="entry name" value="Maf"/>
    <property type="match status" value="1"/>
</dbReference>
<dbReference type="InterPro" id="IPR029001">
    <property type="entry name" value="ITPase-like_fam"/>
</dbReference>
<dbReference type="InterPro" id="IPR003697">
    <property type="entry name" value="Maf-like"/>
</dbReference>
<dbReference type="NCBIfam" id="TIGR00172">
    <property type="entry name" value="maf"/>
    <property type="match status" value="1"/>
</dbReference>
<dbReference type="PANTHER" id="PTHR43213:SF10">
    <property type="entry name" value="7-METHYL-GTP PYROPHOSPHATASE"/>
    <property type="match status" value="1"/>
</dbReference>
<dbReference type="PANTHER" id="PTHR43213">
    <property type="entry name" value="BIFUNCTIONAL DTTP/UTP PYROPHOSPHATASE/METHYLTRANSFERASE PROTEIN-RELATED"/>
    <property type="match status" value="1"/>
</dbReference>
<dbReference type="Pfam" id="PF02545">
    <property type="entry name" value="Maf"/>
    <property type="match status" value="1"/>
</dbReference>
<dbReference type="PIRSF" id="PIRSF006305">
    <property type="entry name" value="Maf"/>
    <property type="match status" value="1"/>
</dbReference>
<dbReference type="SUPFAM" id="SSF52972">
    <property type="entry name" value="ITPase-like"/>
    <property type="match status" value="1"/>
</dbReference>
<evidence type="ECO:0000255" key="1">
    <source>
        <dbReference type="HAMAP-Rule" id="MF_00528"/>
    </source>
</evidence>
<gene>
    <name type="ordered locus">ACIAD1930</name>
</gene>
<comment type="function">
    <text evidence="1">Nucleoside triphosphate pyrophosphatase. May have a dual role in cell division arrest and in preventing the incorporation of modified nucleotides into cellular nucleic acids.</text>
</comment>
<comment type="catalytic activity">
    <reaction evidence="1">
        <text>a ribonucleoside 5'-triphosphate + H2O = a ribonucleoside 5'-phosphate + diphosphate + H(+)</text>
        <dbReference type="Rhea" id="RHEA:23996"/>
        <dbReference type="ChEBI" id="CHEBI:15377"/>
        <dbReference type="ChEBI" id="CHEBI:15378"/>
        <dbReference type="ChEBI" id="CHEBI:33019"/>
        <dbReference type="ChEBI" id="CHEBI:58043"/>
        <dbReference type="ChEBI" id="CHEBI:61557"/>
        <dbReference type="EC" id="3.6.1.9"/>
    </reaction>
</comment>
<comment type="catalytic activity">
    <reaction evidence="1">
        <text>a 2'-deoxyribonucleoside 5'-triphosphate + H2O = a 2'-deoxyribonucleoside 5'-phosphate + diphosphate + H(+)</text>
        <dbReference type="Rhea" id="RHEA:44644"/>
        <dbReference type="ChEBI" id="CHEBI:15377"/>
        <dbReference type="ChEBI" id="CHEBI:15378"/>
        <dbReference type="ChEBI" id="CHEBI:33019"/>
        <dbReference type="ChEBI" id="CHEBI:61560"/>
        <dbReference type="ChEBI" id="CHEBI:65317"/>
        <dbReference type="EC" id="3.6.1.9"/>
    </reaction>
</comment>
<comment type="cofactor">
    <cofactor evidence="1">
        <name>a divalent metal cation</name>
        <dbReference type="ChEBI" id="CHEBI:60240"/>
    </cofactor>
</comment>
<comment type="subcellular location">
    <subcellularLocation>
        <location evidence="1">Cytoplasm</location>
    </subcellularLocation>
</comment>
<comment type="similarity">
    <text evidence="1">Belongs to the Maf family.</text>
</comment>
<name>NTPP_ACIAD</name>
<proteinExistence type="inferred from homology"/>